<comment type="function">
    <text evidence="1 3">The heterodimer glycoprotein H-glycoprotein L is required for the fusion of viral and plasma membranes leading to virus entry into the host cell. Following initial binding to host receptor, membrane fusion is mediated by the fusion machinery composed of gB and the heterodimer gH/gL. May also be involved in the fusion between the virion envelope and the outer nuclear membrane during virion morphogenesis (By similarity). In human cytomegalovirus, forms two distincts complexes to mediate viral entry, a trimer and a pentamer at the surface of the virion envelope. The gH-gL-gO trimer is required for infection in fibroblasts by interacting with host PDGFRA, and in glioblastoma cells by interacting with host EPHA2. The gH-gL-UL128-UL130-UL131A pentamer is essential for viral entry in epithelial, endothelial and myeloid cells via interaction with host NRP2 (By similarity).</text>
</comment>
<comment type="subunit">
    <text evidence="1 3 4">Interacts with glycoprotein L (gL); this interaction is necessary for the correct processing and cell surface expression of gH. The heterodimer gH/gL seems to interact with gB trimers during fusion (By similarity). Forms the envelope pentamer complex (PC) composed of gH, gL, UL128, UL130, and UL131A. The pentamer interacts with host NRP2. Forms the envelope trimer complex composed of gH, gL, and gO (PubMed:9733861). The trimer interacts with host PDGFRA (By similarity). The trimer also interacts with host EPHA2 (By similarity). Interacts with UL116 (By similarity).</text>
</comment>
<comment type="subcellular location">
    <subcellularLocation>
        <location evidence="1 3">Virion membrane</location>
        <topology evidence="3">Single-pass type I membrane protein</topology>
    </subcellularLocation>
    <subcellularLocation>
        <location evidence="3">Host cell membrane</location>
        <topology evidence="3">Single-pass type I membrane protein</topology>
    </subcellularLocation>
    <subcellularLocation>
        <location evidence="3">Host endosome membrane</location>
        <topology evidence="3">Single-pass type I membrane protein</topology>
    </subcellularLocation>
    <text evidence="1">During virion morphogenesis, this protein probably accumulates in the endosomes and trans-Golgi where secondary envelopment occurs. It is probably transported to the cell surface from where it is endocytosed and directed to the trans-Golgi network (TGN).</text>
</comment>
<comment type="PTM">
    <text evidence="3">N-glycosylated, O-glycosylated, and sialylated.</text>
</comment>
<comment type="similarity">
    <text evidence="3">Belongs to the herpesviridae glycoprotein H family.</text>
</comment>
<keyword id="KW-0002">3D-structure</keyword>
<keyword id="KW-0903">Direct protein sequencing</keyword>
<keyword id="KW-1169">Fusion of virus membrane with host cell membrane</keyword>
<keyword id="KW-1168">Fusion of virus membrane with host membrane</keyword>
<keyword id="KW-0325">Glycoprotein</keyword>
<keyword id="KW-1032">Host cell membrane</keyword>
<keyword id="KW-1039">Host endosome</keyword>
<keyword id="KW-1043">Host membrane</keyword>
<keyword id="KW-0945">Host-virus interaction</keyword>
<keyword id="KW-0472">Membrane</keyword>
<keyword id="KW-1185">Reference proteome</keyword>
<keyword id="KW-0730">Sialic acid</keyword>
<keyword id="KW-0732">Signal</keyword>
<keyword id="KW-0812">Transmembrane</keyword>
<keyword id="KW-1133">Transmembrane helix</keyword>
<keyword id="KW-1161">Viral attachment to host cell</keyword>
<keyword id="KW-1234">Viral attachment to host entry receptor</keyword>
<keyword id="KW-0261">Viral envelope protein</keyword>
<keyword id="KW-1162">Viral penetration into host cytoplasm</keyword>
<keyword id="KW-0946">Virion</keyword>
<keyword id="KW-1160">Virus entry into host cell</keyword>
<feature type="signal peptide" evidence="2">
    <location>
        <begin position="1"/>
        <end position="23"/>
    </location>
</feature>
<feature type="chain" id="PRO_0000038255" description="Envelope glycoprotein H">
    <location>
        <begin position="24"/>
        <end position="743"/>
    </location>
</feature>
<feature type="topological domain" description="Virion surface" evidence="3">
    <location>
        <begin position="24"/>
        <end position="720"/>
    </location>
</feature>
<feature type="transmembrane region" description="Helical" evidence="3">
    <location>
        <begin position="721"/>
        <end position="741"/>
    </location>
</feature>
<feature type="topological domain" description="Intravirion" evidence="3">
    <location>
        <begin position="742"/>
        <end position="743"/>
    </location>
</feature>
<feature type="region of interest" description="Interaction with gL" evidence="3">
    <location>
        <begin position="218"/>
        <end position="281"/>
    </location>
</feature>
<feature type="glycosylation site" description="N-linked (GlcNAc...) asparagine; by host" evidence="3">
    <location>
        <position position="56"/>
    </location>
</feature>
<feature type="glycosylation site" description="N-linked (GlcNAc...) asparagine; by host" evidence="3">
    <location>
        <position position="63"/>
    </location>
</feature>
<feature type="glycosylation site" description="N-linked (GlcNAc...) asparagine; by host" evidence="3">
    <location>
        <position position="68"/>
    </location>
</feature>
<feature type="glycosylation site" description="N-linked (GlcNAc...) asparagine; by host" evidence="3">
    <location>
        <position position="193"/>
    </location>
</feature>
<feature type="glycosylation site" description="N-linked (GlcNAc...) asparagine; by host" evidence="3">
    <location>
        <position position="642"/>
    </location>
</feature>
<feature type="glycosylation site" description="N-linked (GlcNAc...) asparagine; by host" evidence="3">
    <location>
        <position position="701"/>
    </location>
</feature>
<feature type="strand" evidence="6">
    <location>
        <begin position="50"/>
        <end position="53"/>
    </location>
</feature>
<feature type="strand" evidence="6">
    <location>
        <begin position="67"/>
        <end position="73"/>
    </location>
</feature>
<feature type="strand" evidence="6">
    <location>
        <begin position="76"/>
        <end position="84"/>
    </location>
</feature>
<feature type="strand" evidence="6">
    <location>
        <begin position="87"/>
        <end position="93"/>
    </location>
</feature>
<feature type="helix" evidence="6">
    <location>
        <begin position="95"/>
        <end position="98"/>
    </location>
</feature>
<feature type="helix" evidence="6">
    <location>
        <begin position="101"/>
        <end position="107"/>
    </location>
</feature>
<feature type="helix" evidence="6">
    <location>
        <begin position="116"/>
        <end position="121"/>
    </location>
</feature>
<feature type="turn" evidence="6">
    <location>
        <begin position="129"/>
        <end position="132"/>
    </location>
</feature>
<feature type="helix" evidence="5">
    <location>
        <begin position="149"/>
        <end position="151"/>
    </location>
</feature>
<feature type="strand" evidence="6">
    <location>
        <begin position="153"/>
        <end position="156"/>
    </location>
</feature>
<feature type="strand" evidence="6">
    <location>
        <begin position="194"/>
        <end position="198"/>
    </location>
</feature>
<feature type="turn" evidence="6">
    <location>
        <begin position="199"/>
        <end position="201"/>
    </location>
</feature>
<feature type="strand" evidence="6">
    <location>
        <begin position="203"/>
        <end position="205"/>
    </location>
</feature>
<feature type="strand" evidence="6">
    <location>
        <begin position="208"/>
        <end position="230"/>
    </location>
</feature>
<feature type="strand" evidence="6">
    <location>
        <begin position="232"/>
        <end position="242"/>
    </location>
</feature>
<feature type="strand" evidence="6">
    <location>
        <begin position="247"/>
        <end position="252"/>
    </location>
</feature>
<feature type="helix" evidence="6">
    <location>
        <begin position="265"/>
        <end position="268"/>
    </location>
</feature>
<feature type="strand" evidence="6">
    <location>
        <begin position="269"/>
        <end position="272"/>
    </location>
</feature>
<feature type="strand" evidence="6">
    <location>
        <begin position="277"/>
        <end position="283"/>
    </location>
</feature>
<feature type="helix" evidence="6">
    <location>
        <begin position="284"/>
        <end position="286"/>
    </location>
</feature>
<feature type="turn" evidence="6">
    <location>
        <begin position="287"/>
        <end position="290"/>
    </location>
</feature>
<feature type="helix" evidence="6">
    <location>
        <begin position="291"/>
        <end position="294"/>
    </location>
</feature>
<feature type="strand" evidence="5">
    <location>
        <begin position="296"/>
        <end position="299"/>
    </location>
</feature>
<feature type="helix" evidence="6">
    <location>
        <begin position="300"/>
        <end position="303"/>
    </location>
</feature>
<feature type="helix" evidence="6">
    <location>
        <begin position="310"/>
        <end position="326"/>
    </location>
</feature>
<feature type="helix" evidence="6">
    <location>
        <begin position="336"/>
        <end position="351"/>
    </location>
</feature>
<feature type="helix" evidence="6">
    <location>
        <begin position="355"/>
        <end position="358"/>
    </location>
</feature>
<feature type="helix" evidence="6">
    <location>
        <begin position="364"/>
        <end position="385"/>
    </location>
</feature>
<feature type="helix" evidence="5">
    <location>
        <begin position="389"/>
        <end position="391"/>
    </location>
</feature>
<feature type="helix" evidence="6">
    <location>
        <begin position="398"/>
        <end position="408"/>
    </location>
</feature>
<feature type="helix" evidence="5">
    <location>
        <begin position="411"/>
        <end position="413"/>
    </location>
</feature>
<feature type="helix" evidence="6">
    <location>
        <begin position="417"/>
        <end position="419"/>
    </location>
</feature>
<feature type="turn" evidence="6">
    <location>
        <begin position="420"/>
        <end position="423"/>
    </location>
</feature>
<feature type="helix" evidence="6">
    <location>
        <begin position="424"/>
        <end position="429"/>
    </location>
</feature>
<feature type="helix" evidence="6">
    <location>
        <begin position="433"/>
        <end position="435"/>
    </location>
</feature>
<feature type="helix" evidence="6">
    <location>
        <begin position="438"/>
        <end position="454"/>
    </location>
</feature>
<feature type="turn" evidence="6">
    <location>
        <begin position="455"/>
        <end position="457"/>
    </location>
</feature>
<feature type="helix" evidence="6">
    <location>
        <begin position="462"/>
        <end position="475"/>
    </location>
</feature>
<feature type="helix" evidence="6">
    <location>
        <begin position="482"/>
        <end position="494"/>
    </location>
</feature>
<feature type="helix" evidence="6">
    <location>
        <begin position="498"/>
        <end position="506"/>
    </location>
</feature>
<feature type="turn" evidence="6">
    <location>
        <begin position="507"/>
        <end position="511"/>
    </location>
</feature>
<feature type="helix" evidence="6">
    <location>
        <begin position="516"/>
        <end position="519"/>
    </location>
</feature>
<feature type="strand" evidence="5">
    <location>
        <begin position="522"/>
        <end position="524"/>
    </location>
</feature>
<feature type="strand" evidence="6">
    <location>
        <begin position="525"/>
        <end position="527"/>
    </location>
</feature>
<feature type="helix" evidence="6">
    <location>
        <begin position="533"/>
        <end position="537"/>
    </location>
</feature>
<feature type="helix" evidence="6">
    <location>
        <begin position="542"/>
        <end position="544"/>
    </location>
</feature>
<feature type="helix" evidence="6">
    <location>
        <begin position="549"/>
        <end position="559"/>
    </location>
</feature>
<feature type="helix" evidence="5">
    <location>
        <begin position="564"/>
        <end position="566"/>
    </location>
</feature>
<feature type="turn" evidence="6">
    <location>
        <begin position="568"/>
        <end position="572"/>
    </location>
</feature>
<feature type="strand" evidence="6">
    <location>
        <begin position="579"/>
        <end position="582"/>
    </location>
</feature>
<feature type="strand" evidence="6">
    <location>
        <begin position="585"/>
        <end position="588"/>
    </location>
</feature>
<feature type="strand" evidence="6">
    <location>
        <begin position="590"/>
        <end position="595"/>
    </location>
</feature>
<feature type="strand" evidence="6">
    <location>
        <begin position="598"/>
        <end position="600"/>
    </location>
</feature>
<feature type="strand" evidence="6">
    <location>
        <begin position="602"/>
        <end position="604"/>
    </location>
</feature>
<feature type="helix" evidence="5">
    <location>
        <begin position="609"/>
        <end position="611"/>
    </location>
</feature>
<feature type="strand" evidence="6">
    <location>
        <begin position="615"/>
        <end position="617"/>
    </location>
</feature>
<feature type="strand" evidence="6">
    <location>
        <begin position="620"/>
        <end position="623"/>
    </location>
</feature>
<feature type="strand" evidence="6">
    <location>
        <begin position="649"/>
        <end position="659"/>
    </location>
</feature>
<feature type="turn" evidence="6">
    <location>
        <begin position="660"/>
        <end position="662"/>
    </location>
</feature>
<feature type="strand" evidence="6">
    <location>
        <begin position="663"/>
        <end position="670"/>
    </location>
</feature>
<feature type="helix" evidence="6">
    <location>
        <begin position="673"/>
        <end position="680"/>
    </location>
</feature>
<feature type="helix" evidence="6">
    <location>
        <begin position="682"/>
        <end position="684"/>
    </location>
</feature>
<feature type="strand" evidence="6">
    <location>
        <begin position="693"/>
        <end position="698"/>
    </location>
</feature>
<feature type="strand" evidence="6">
    <location>
        <begin position="700"/>
        <end position="702"/>
    </location>
</feature>
<feature type="strand" evidence="6">
    <location>
        <begin position="704"/>
        <end position="706"/>
    </location>
</feature>
<feature type="turn" evidence="5">
    <location>
        <begin position="708"/>
        <end position="710"/>
    </location>
</feature>
<evidence type="ECO:0000250" key="1">
    <source>
        <dbReference type="UniProtKB" id="Q6SW67"/>
    </source>
</evidence>
<evidence type="ECO:0000255" key="2"/>
<evidence type="ECO:0000255" key="3">
    <source>
        <dbReference type="HAMAP-Rule" id="MF_04033"/>
    </source>
</evidence>
<evidence type="ECO:0000269" key="4">
    <source>
    </source>
</evidence>
<evidence type="ECO:0007829" key="5">
    <source>
        <dbReference type="PDB" id="7RAM"/>
    </source>
</evidence>
<evidence type="ECO:0007829" key="6">
    <source>
        <dbReference type="PDB" id="8TCO"/>
    </source>
</evidence>
<proteinExistence type="evidence at protein level"/>
<organism>
    <name type="scientific">Human cytomegalovirus (strain AD169)</name>
    <name type="common">HHV-5</name>
    <name type="synonym">Human herpesvirus 5</name>
    <dbReference type="NCBI Taxonomy" id="10360"/>
    <lineage>
        <taxon>Viruses</taxon>
        <taxon>Duplodnaviria</taxon>
        <taxon>Heunggongvirae</taxon>
        <taxon>Peploviricota</taxon>
        <taxon>Herviviricetes</taxon>
        <taxon>Herpesvirales</taxon>
        <taxon>Orthoherpesviridae</taxon>
        <taxon>Betaherpesvirinae</taxon>
        <taxon>Cytomegalovirus</taxon>
        <taxon>Cytomegalovirus humanbeta5</taxon>
        <taxon>Human cytomegalovirus</taxon>
    </lineage>
</organism>
<dbReference type="EMBL" id="X17403">
    <property type="protein sequence ID" value="CAA35390.1"/>
    <property type="molecule type" value="Genomic_DNA"/>
</dbReference>
<dbReference type="EMBL" id="M19882">
    <property type="protein sequence ID" value="AAA45938.1"/>
    <property type="molecule type" value="Genomic_DNA"/>
</dbReference>
<dbReference type="EMBL" id="BK000394">
    <property type="protein sequence ID" value="DAA00171.1"/>
    <property type="molecule type" value="Genomic_DNA"/>
</dbReference>
<dbReference type="PIR" id="A29888">
    <property type="entry name" value="VGBEHC"/>
</dbReference>
<dbReference type="PDB" id="7RAM">
    <property type="method" value="EM"/>
    <property type="resolution" value="3.43 A"/>
    <property type="chains" value="A=41-718"/>
</dbReference>
<dbReference type="PDB" id="8TCO">
    <property type="method" value="EM"/>
    <property type="resolution" value="2.80 A"/>
    <property type="chains" value="A=1-743"/>
</dbReference>
<dbReference type="PDB" id="9DIX">
    <property type="method" value="EM"/>
    <property type="resolution" value="3.51 A"/>
    <property type="chains" value="A/D=30-709"/>
</dbReference>
<dbReference type="PDB" id="9DIY">
    <property type="method" value="EM"/>
    <property type="resolution" value="5.36 A"/>
    <property type="chains" value="A=30-709"/>
</dbReference>
<dbReference type="PDBsum" id="7RAM"/>
<dbReference type="PDBsum" id="8TCO"/>
<dbReference type="PDBsum" id="9DIX"/>
<dbReference type="PDBsum" id="9DIY"/>
<dbReference type="EMDB" id="EMD-24369"/>
<dbReference type="SMR" id="P12824"/>
<dbReference type="ChEMBL" id="CHEMBL3988504"/>
<dbReference type="GlyCosmos" id="P12824">
    <property type="glycosylation" value="6 sites, No reported glycans"/>
</dbReference>
<dbReference type="ABCD" id="P12824">
    <property type="antibodies" value="2 sequenced antibodies"/>
</dbReference>
<dbReference type="Proteomes" id="UP000008991">
    <property type="component" value="Segment"/>
</dbReference>
<dbReference type="Proteomes" id="UP000008992">
    <property type="component" value="Segment"/>
</dbReference>
<dbReference type="GO" id="GO:0044175">
    <property type="term" value="C:host cell endosome membrane"/>
    <property type="evidence" value="ECO:0007669"/>
    <property type="project" value="UniProtKB-SubCell"/>
</dbReference>
<dbReference type="GO" id="GO:0020002">
    <property type="term" value="C:host cell plasma membrane"/>
    <property type="evidence" value="ECO:0007669"/>
    <property type="project" value="UniProtKB-SubCell"/>
</dbReference>
<dbReference type="GO" id="GO:0016020">
    <property type="term" value="C:membrane"/>
    <property type="evidence" value="ECO:0007669"/>
    <property type="project" value="UniProtKB-KW"/>
</dbReference>
<dbReference type="GO" id="GO:0019031">
    <property type="term" value="C:viral envelope"/>
    <property type="evidence" value="ECO:0007669"/>
    <property type="project" value="UniProtKB-KW"/>
</dbReference>
<dbReference type="GO" id="GO:0055036">
    <property type="term" value="C:virion membrane"/>
    <property type="evidence" value="ECO:0007669"/>
    <property type="project" value="UniProtKB-SubCell"/>
</dbReference>
<dbReference type="GO" id="GO:0098670">
    <property type="term" value="P:entry receptor-mediated virion attachment to host cell"/>
    <property type="evidence" value="ECO:0007669"/>
    <property type="project" value="UniProtKB-KW"/>
</dbReference>
<dbReference type="GO" id="GO:0019064">
    <property type="term" value="P:fusion of virus membrane with host plasma membrane"/>
    <property type="evidence" value="ECO:0007669"/>
    <property type="project" value="UniProtKB-KW"/>
</dbReference>
<dbReference type="GO" id="GO:0046718">
    <property type="term" value="P:symbiont entry into host cell"/>
    <property type="evidence" value="ECO:0007669"/>
    <property type="project" value="UniProtKB-KW"/>
</dbReference>
<dbReference type="Gene3D" id="2.60.40.3190">
    <property type="entry name" value="Herpesvirus glycoprotein H, C-terminal domain"/>
    <property type="match status" value="1"/>
</dbReference>
<dbReference type="HAMAP" id="MF_04033">
    <property type="entry name" value="HSV_GH"/>
    <property type="match status" value="1"/>
</dbReference>
<dbReference type="InterPro" id="IPR003493">
    <property type="entry name" value="Herpes_gH"/>
</dbReference>
<dbReference type="InterPro" id="IPR035305">
    <property type="entry name" value="Herpes_glycoH_C"/>
</dbReference>
<dbReference type="InterPro" id="IPR038172">
    <property type="entry name" value="Herpes_glycoH_C_sf"/>
</dbReference>
<dbReference type="Pfam" id="PF17488">
    <property type="entry name" value="Herpes_glycoH_C"/>
    <property type="match status" value="1"/>
</dbReference>
<dbReference type="Pfam" id="PF02489">
    <property type="entry name" value="Herpes_glycop_H"/>
    <property type="match status" value="1"/>
</dbReference>
<reference key="1">
    <citation type="journal article" date="1988" name="J. Virol.">
        <title>Identification and expression of a human cytomegalovirus glycoprotein with homology to the Epstein-Barr virus BXLF2 product, varicella-zoster virus gpIII, and herpes simplex virus type 1 glycoprotein H.</title>
        <authorList>
            <person name="Cranage M.P."/>
            <person name="Smith G.L."/>
            <person name="Bell S.E."/>
            <person name="Hart H."/>
            <person name="Brown C."/>
            <person name="Bankier A.T."/>
            <person name="Tomlinson P."/>
            <person name="Barrell B.G."/>
            <person name="Minson T.C."/>
        </authorList>
    </citation>
    <scope>NUCLEOTIDE SEQUENCE [GENOMIC DNA]</scope>
</reference>
<reference key="2">
    <citation type="journal article" date="1990" name="Curr. Top. Microbiol. Immunol.">
        <title>Analysis of the protein-coding content of the sequence of human cytomegalovirus strain AD169.</title>
        <authorList>
            <person name="Chee M.S."/>
            <person name="Bankier A.T."/>
            <person name="Beck S."/>
            <person name="Bohni R."/>
            <person name="Brown C.M."/>
            <person name="Cerny R."/>
            <person name="Horsnell T."/>
            <person name="Hutchison C.A. III"/>
            <person name="Kouzarides T."/>
            <person name="Martignetti J.A."/>
            <person name="Preddie E."/>
            <person name="Satchwell S.C."/>
            <person name="Tomlinson P."/>
            <person name="Weston K.M."/>
            <person name="Barrell B.G."/>
        </authorList>
    </citation>
    <scope>NUCLEOTIDE SEQUENCE [LARGE SCALE GENOMIC DNA]</scope>
</reference>
<reference key="3">
    <citation type="journal article" date="2003" name="J. Gen. Virol.">
        <title>The human cytomegalovirus genome revisited: comparison with the chimpanzee cytomegalovirus genome.</title>
        <authorList>
            <person name="Davison A.J."/>
            <person name="Dolan A."/>
            <person name="Akter P."/>
            <person name="Addison C."/>
            <person name="Dargan D.J."/>
            <person name="Alcendor D.J."/>
            <person name="McGeoch D.J."/>
            <person name="Hayward G.S."/>
        </authorList>
    </citation>
    <scope>GENOME REANNOTATION</scope>
</reference>
<reference key="4">
    <citation type="journal article" date="2003" name="J. Gen. Virol.">
        <authorList>
            <person name="Davison A.J."/>
            <person name="Dolan A."/>
            <person name="Akter P."/>
            <person name="Addison C."/>
            <person name="Dargan D.J."/>
            <person name="Alcendor D.J."/>
            <person name="McGeoch D.J."/>
            <person name="Hayward G.S."/>
        </authorList>
    </citation>
    <scope>ERRATUM OF PUBMED:12533697</scope>
</reference>
<reference key="5">
    <citation type="journal article" date="1998" name="J. Virol.">
        <title>The human cytomegalovirus UL74 gene encodes the third component of the glycoprotein H-glycoprotein L-containing envelope complex.</title>
        <authorList>
            <person name="Huber M.T."/>
            <person name="Compton T."/>
        </authorList>
    </citation>
    <scope>PROTEIN SEQUENCE OF 32-44</scope>
    <scope>IDENTIFICATION IN A COMPLEX WITH GL AND GO</scope>
</reference>
<reference key="6">
    <citation type="journal article" date="2004" name="J. Virol.">
        <title>Identification of proteins in human cytomegalovirus (HCMV) particles: the HCMV proteome.</title>
        <authorList>
            <person name="Varnum S.M."/>
            <person name="Streblow D.N."/>
            <person name="Monroe M.E."/>
            <person name="Smith P."/>
            <person name="Auberry K.J."/>
            <person name="Pasa-Tolic L."/>
            <person name="Wang D."/>
            <person name="Camp D.G. II"/>
            <person name="Rodland K."/>
            <person name="Wiley S."/>
            <person name="Britt W."/>
            <person name="Shenk T."/>
            <person name="Smith R.D."/>
            <person name="Nelson J.A."/>
        </authorList>
    </citation>
    <scope>IDENTIFICATION</scope>
</reference>
<reference key="7">
    <citation type="journal article" date="2004" name="J. Virol.">
        <authorList>
            <person name="Varnum S.M."/>
            <person name="Streblow D.N."/>
            <person name="Monroe M.E."/>
            <person name="Smith P."/>
            <person name="Auberry K.J."/>
            <person name="Pasa-Tolic L."/>
            <person name="Wang D."/>
            <person name="Camp D.G. II"/>
            <person name="Rodland K."/>
            <person name="Wiley S."/>
            <person name="Britt W."/>
            <person name="Shenk T."/>
            <person name="Smith R.D."/>
            <person name="Nelson J.A."/>
        </authorList>
    </citation>
    <scope>ERRATUM OF PUBMED:15452216</scope>
</reference>
<gene>
    <name evidence="3" type="primary">gH</name>
    <name type="synonym">UL75</name>
</gene>
<protein>
    <recommendedName>
        <fullName evidence="3">Envelope glycoprotein H</fullName>
        <shortName evidence="3">gH</shortName>
    </recommendedName>
</protein>
<organismHost>
    <name type="scientific">Homo sapiens</name>
    <name type="common">Human</name>
    <dbReference type="NCBI Taxonomy" id="9606"/>
</organismHost>
<sequence>MRPGLPPYLTVFTVYLLSHLPSQRYGADAASEALDPHAFHLLLNTYGRPIRFLRENTTQCTYNSSLRNSTVVRENAISFNFFQSYNQYYVFHMPRCLFAGPLAEQFLNQVDLTETLERYQQRLNTYALVSKDLASYRSFSQQLKAQDSLGQQPTTVPPPIDLSIPHVWMPPQTTPHDWKGSHTTSGLHRPHFNQTCILFDGHDLLFSTVTPCLHQGFYLMDELRYVKITLTEDFFVVTVSIDDDTPMLLIFGHLPRVLFKAPYQRDNFILRQTEKHELLVLVKKAQLNRHSYLKDSDFLDAALDFNYLDLSALLRNSFHRYAVDVLKSGRCQMLDRRTVEMAFAYALALFAAARQEEAGTEISIPRALDRQAALLQIQEFMITCLSQTPPRTTLLLYPTAVDLAKRALWTPDQITDITSLVRLVYILSKQNQQHLIPQWALRQIADFALQLHKTHLASFLSAFARQELYLMGSLVHSMLVHTTERREIFIVETGLCSLAELSHFTQLLAHPHHEYLSDLYTPCSSSGRRDHSLERLTRLFPDATVPATVPAALSILSTMQPSTLETFPDLFCLPLGESFSALTVSEHVSYVVTNQYLIKGISYPVSTTVVGQSLIITQTDSQTKCELTRNMHTTHSITAALNISLENCAFCQSALLEYDDTQGVINIMYMHDSDDVLFALDPYNEVVVSSPRTHYLMLLKNGTVLEVTDVVVDATDSRLLMMSVYALSAIIGIYLLYRMLKTC</sequence>
<accession>P12824</accession>
<accession>Q7M6L7</accession>
<name>GH_HCMVA</name>